<accession>B3Q6P8</accession>
<comment type="function">
    <text evidence="1 3">Sigma factors are initiation factors that promote the attachment of RNA polymerase to specific initiation sites and are then released (By similarity). Regulates expression of hpnP under a variety of stresses, including high temperature, pH stress, and presence of nonionic osmolytes (PubMed:23524612).</text>
</comment>
<comment type="domain">
    <text evidence="2">The sigma-70 factor domain-2 mediates sequence-specific interaction with the -10 element in promoter DNA, and plays an important role in melting the double-stranded DNA and the formation of the transcription bubble. The sigma-70 factor domain-2 mediates interaction with the RNA polymerase subunits RpoB and RpoC.</text>
</comment>
<comment type="domain">
    <text evidence="2">The sigma-70 factor domain-4 contains a helix-turn-helix (H-T-H) motif that mediates interaction with the -35 element in promoter DNA. The domain also mediates interaction with the RNA polymerase subunit RpoA.</text>
</comment>
<comment type="similarity">
    <text evidence="5">Belongs to the sigma-70 factor family. ECF subfamily.</text>
</comment>
<reference key="1">
    <citation type="submission" date="2008-05" db="EMBL/GenBank/DDBJ databases">
        <title>Complete sequence of Rhodopseudomonas palustris TIE-1.</title>
        <authorList>
            <consortium name="US DOE Joint Genome Institute"/>
            <person name="Lucas S."/>
            <person name="Copeland A."/>
            <person name="Lapidus A."/>
            <person name="Glavina del Rio T."/>
            <person name="Dalin E."/>
            <person name="Tice H."/>
            <person name="Pitluck S."/>
            <person name="Chain P."/>
            <person name="Malfatti S."/>
            <person name="Shin M."/>
            <person name="Vergez L."/>
            <person name="Lang D."/>
            <person name="Schmutz J."/>
            <person name="Larimer F."/>
            <person name="Land M."/>
            <person name="Hauser L."/>
            <person name="Kyrpides N."/>
            <person name="Mikhailova N."/>
            <person name="Emerson D."/>
            <person name="Newman D.K."/>
            <person name="Roden E."/>
            <person name="Richardson P."/>
        </authorList>
    </citation>
    <scope>NUCLEOTIDE SEQUENCE [LARGE SCALE GENOMIC DNA]</scope>
    <source>
        <strain>TIE-1</strain>
    </source>
</reference>
<reference key="2">
    <citation type="journal article" date="2013" name="J. Bacteriol.">
        <title>The general stress response factor EcfG regulates expression of the C-2 hopanoid methylase HpnP in Rhodopseudomonas palustris TIE-1.</title>
        <authorList>
            <person name="Kulkarni G."/>
            <person name="Wu C.H."/>
            <person name="Newman D.K."/>
        </authorList>
    </citation>
    <scope>FUNCTION AS A REGULATOR</scope>
    <source>
        <strain>TIE-1</strain>
    </source>
</reference>
<evidence type="ECO:0000250" key="1"/>
<evidence type="ECO:0000250" key="2">
    <source>
        <dbReference type="UniProtKB" id="Q9EZJ8"/>
    </source>
</evidence>
<evidence type="ECO:0000269" key="3">
    <source>
    </source>
</evidence>
<evidence type="ECO:0000303" key="4">
    <source>
    </source>
</evidence>
<evidence type="ECO:0000305" key="5"/>
<evidence type="ECO:0000312" key="6">
    <source>
        <dbReference type="EMBL" id="ACF03197.1"/>
    </source>
</evidence>
<feature type="chain" id="PRO_0000434047" description="ECF RNA polymerase sigma factor EcfG">
    <location>
        <begin position="1"/>
        <end position="181"/>
    </location>
</feature>
<feature type="region of interest" description="Sigma-70 factor domain-2" evidence="5">
    <location>
        <begin position="15"/>
        <end position="77"/>
    </location>
</feature>
<feature type="region of interest" description="Sigma-70 factor domain-4" evidence="5">
    <location>
        <begin position="103"/>
        <end position="155"/>
    </location>
</feature>
<dbReference type="EMBL" id="CP001096">
    <property type="protein sequence ID" value="ACF03197.1"/>
    <property type="molecule type" value="Genomic_DNA"/>
</dbReference>
<dbReference type="RefSeq" id="WP_011159760.1">
    <property type="nucleotide sequence ID" value="NC_011004.1"/>
</dbReference>
<dbReference type="SMR" id="B3Q6P8"/>
<dbReference type="KEGG" id="rpt:Rpal_4706"/>
<dbReference type="HOGENOM" id="CLU_047691_1_4_5"/>
<dbReference type="OrthoDB" id="9803470at2"/>
<dbReference type="Proteomes" id="UP000001725">
    <property type="component" value="Chromosome"/>
</dbReference>
<dbReference type="GO" id="GO:0003677">
    <property type="term" value="F:DNA binding"/>
    <property type="evidence" value="ECO:0007669"/>
    <property type="project" value="UniProtKB-KW"/>
</dbReference>
<dbReference type="GO" id="GO:0016987">
    <property type="term" value="F:sigma factor activity"/>
    <property type="evidence" value="ECO:0007669"/>
    <property type="project" value="UniProtKB-KW"/>
</dbReference>
<dbReference type="GO" id="GO:0006352">
    <property type="term" value="P:DNA-templated transcription initiation"/>
    <property type="evidence" value="ECO:0007669"/>
    <property type="project" value="InterPro"/>
</dbReference>
<dbReference type="CDD" id="cd06171">
    <property type="entry name" value="Sigma70_r4"/>
    <property type="match status" value="1"/>
</dbReference>
<dbReference type="Gene3D" id="1.10.1740.10">
    <property type="match status" value="1"/>
</dbReference>
<dbReference type="Gene3D" id="1.10.10.10">
    <property type="entry name" value="Winged helix-like DNA-binding domain superfamily/Winged helix DNA-binding domain"/>
    <property type="match status" value="1"/>
</dbReference>
<dbReference type="InterPro" id="IPR039425">
    <property type="entry name" value="RNA_pol_sigma-70-like"/>
</dbReference>
<dbReference type="InterPro" id="IPR014284">
    <property type="entry name" value="RNA_pol_sigma-70_dom"/>
</dbReference>
<dbReference type="InterPro" id="IPR000838">
    <property type="entry name" value="RNA_pol_sigma70_ECF_CS"/>
</dbReference>
<dbReference type="InterPro" id="IPR007627">
    <property type="entry name" value="RNA_pol_sigma70_r2"/>
</dbReference>
<dbReference type="InterPro" id="IPR013249">
    <property type="entry name" value="RNA_pol_sigma70_r4_t2"/>
</dbReference>
<dbReference type="InterPro" id="IPR013325">
    <property type="entry name" value="RNA_pol_sigma_r2"/>
</dbReference>
<dbReference type="InterPro" id="IPR013324">
    <property type="entry name" value="RNA_pol_sigma_r3/r4-like"/>
</dbReference>
<dbReference type="InterPro" id="IPR036388">
    <property type="entry name" value="WH-like_DNA-bd_sf"/>
</dbReference>
<dbReference type="NCBIfam" id="NF009192">
    <property type="entry name" value="PRK12540.1"/>
    <property type="match status" value="1"/>
</dbReference>
<dbReference type="NCBIfam" id="NF009199">
    <property type="entry name" value="PRK12547.1"/>
    <property type="match status" value="1"/>
</dbReference>
<dbReference type="NCBIfam" id="TIGR02937">
    <property type="entry name" value="sigma70-ECF"/>
    <property type="match status" value="1"/>
</dbReference>
<dbReference type="PANTHER" id="PTHR43133">
    <property type="entry name" value="RNA POLYMERASE ECF-TYPE SIGMA FACTO"/>
    <property type="match status" value="1"/>
</dbReference>
<dbReference type="PANTHER" id="PTHR43133:SF25">
    <property type="entry name" value="RNA POLYMERASE SIGMA FACTOR RFAY-RELATED"/>
    <property type="match status" value="1"/>
</dbReference>
<dbReference type="Pfam" id="PF04542">
    <property type="entry name" value="Sigma70_r2"/>
    <property type="match status" value="1"/>
</dbReference>
<dbReference type="Pfam" id="PF08281">
    <property type="entry name" value="Sigma70_r4_2"/>
    <property type="match status" value="1"/>
</dbReference>
<dbReference type="SUPFAM" id="SSF88946">
    <property type="entry name" value="Sigma2 domain of RNA polymerase sigma factors"/>
    <property type="match status" value="1"/>
</dbReference>
<dbReference type="SUPFAM" id="SSF88659">
    <property type="entry name" value="Sigma3 and sigma4 domains of RNA polymerase sigma factors"/>
    <property type="match status" value="1"/>
</dbReference>
<dbReference type="PROSITE" id="PS01063">
    <property type="entry name" value="SIGMA70_ECF"/>
    <property type="match status" value="1"/>
</dbReference>
<name>ECFG_RHOPT</name>
<protein>
    <recommendedName>
        <fullName evidence="5">ECF RNA polymerase sigma factor EcfG</fullName>
    </recommendedName>
    <alternativeName>
        <fullName evidence="4">General stress response factor EcfG</fullName>
    </alternativeName>
</protein>
<proteinExistence type="evidence at protein level"/>
<sequence>MPLTDSLRDDILAAVPSLRAFAISLSGNADRADDLVQETLLRALANIDSFQPGSNLPAWLFTILRNLFRSDYRKRRREVEDADGSYAKTLKSQPGQTAHLEFEEFRAALDKLPQDQREALILVGASGFSYEDAAAICGCAVGTIKSRVNRARSKLSALLYVDGAEDFGPDDTVRAVIGGNG</sequence>
<gene>
    <name evidence="4" type="primary">ecfG</name>
    <name evidence="6" type="ordered locus">Rpal_4706</name>
</gene>
<keyword id="KW-0238">DNA-binding</keyword>
<keyword id="KW-0731">Sigma factor</keyword>
<keyword id="KW-0346">Stress response</keyword>
<keyword id="KW-0804">Transcription</keyword>
<keyword id="KW-0805">Transcription regulation</keyword>
<organism>
    <name type="scientific">Rhodopseudomonas palustris (strain TIE-1)</name>
    <dbReference type="NCBI Taxonomy" id="395960"/>
    <lineage>
        <taxon>Bacteria</taxon>
        <taxon>Pseudomonadati</taxon>
        <taxon>Pseudomonadota</taxon>
        <taxon>Alphaproteobacteria</taxon>
        <taxon>Hyphomicrobiales</taxon>
        <taxon>Nitrobacteraceae</taxon>
        <taxon>Rhodopseudomonas</taxon>
    </lineage>
</organism>